<sequence length="736" mass="85868">MYSRRELEDLEYRYYSEMKDGTRKVKISESLFRCPFCYIDRKRDYQFDDLLRHASGIGGSSRTKDGRDKARHLALERYMRKYLRPRERPRPSPTSDVSSLPKEEFTGKWKSTLSTTEEGEFITTENSSSPHIVKAEPKFVSGDDSGRSGEERLKFSDKPDPFFSNEDKSYPAKRPCLVSGAKEGDEPVQRIGLSHGASFAPTYPQKLVSLGAGNGDQMYVHPWKGILANMKRTFNEKTRKYAGESGSKIREDLIKKGFNPHKVTPLWNGRLGFTGFAIVDFGKEWEGFRNATMFDKHFEVSQCGKRDHDLTRDPGDKLYGWVAKQDDYYSRTAIGDHLRKQGDLKSVSGKEAEDQRKTFTLVSNLENTLVTKSDNLQQMESIYKQTSSVLEKRMKEKDEMINTHNEKMSIMQQTARDYLASIYEEHEKASQHLEAQRKEYEDRENYLDKCQAKNKTERRKLQWQKHKNLMATQEQNKADEDMMRLAEQQQREKDELRKQVRELEEKIDAEQALELEIERMRGDLQVMGHMQEGEGEDSKIKEMIEKTKEELKEKEEDWEYQESLYQTLVVKHGYTNDELQDARKALIRSMRELTTRAYIGVKRMGALDETPFKKVAKEKYPAVEADKKAEELCSLWEEHLGDSAWHPIKVVEKDGIAKEELNEEDEKLQELRKELGEEVYAAVTQALKERNEYNGSGRYIVPELWNFKQNRKASIKEGVVYLVNSWKQKKPKPKRR</sequence>
<proteinExistence type="predicted"/>
<dbReference type="EMBL" id="AC068197">
    <property type="protein sequence ID" value="AAF79392.1"/>
    <property type="molecule type" value="Genomic_DNA"/>
</dbReference>
<dbReference type="EMBL" id="CP002684">
    <property type="protein sequence ID" value="AEE29069.1"/>
    <property type="molecule type" value="Genomic_DNA"/>
</dbReference>
<dbReference type="EMBL" id="CP002684">
    <property type="protein sequence ID" value="ANM60603.1"/>
    <property type="molecule type" value="Genomic_DNA"/>
</dbReference>
<dbReference type="PIR" id="D86271">
    <property type="entry name" value="D86271"/>
</dbReference>
<dbReference type="RefSeq" id="NP_001318996.1">
    <property type="nucleotide sequence ID" value="NM_001332088.1"/>
</dbReference>
<dbReference type="RefSeq" id="NP_172834.1">
    <property type="nucleotide sequence ID" value="NM_101247.3"/>
</dbReference>
<dbReference type="SMR" id="Q9LMH6"/>
<dbReference type="FunCoup" id="Q9LMH6">
    <property type="interactions" value="28"/>
</dbReference>
<dbReference type="STRING" id="3702.Q9LMH6"/>
<dbReference type="GlyGen" id="Q9LMH6">
    <property type="glycosylation" value="1 site"/>
</dbReference>
<dbReference type="iPTMnet" id="Q9LMH6"/>
<dbReference type="PaxDb" id="3702-AT1G13790.1"/>
<dbReference type="ProteomicsDB" id="230773"/>
<dbReference type="EnsemblPlants" id="AT1G13790.1">
    <property type="protein sequence ID" value="AT1G13790.1"/>
    <property type="gene ID" value="AT1G13790"/>
</dbReference>
<dbReference type="EnsemblPlants" id="AT1G13790.2">
    <property type="protein sequence ID" value="AT1G13790.2"/>
    <property type="gene ID" value="AT1G13790"/>
</dbReference>
<dbReference type="GeneID" id="837939"/>
<dbReference type="Gramene" id="AT1G13790.1">
    <property type="protein sequence ID" value="AT1G13790.1"/>
    <property type="gene ID" value="AT1G13790"/>
</dbReference>
<dbReference type="Gramene" id="AT1G13790.2">
    <property type="protein sequence ID" value="AT1G13790.2"/>
    <property type="gene ID" value="AT1G13790"/>
</dbReference>
<dbReference type="KEGG" id="ath:AT1G13790"/>
<dbReference type="Araport" id="AT1G13790"/>
<dbReference type="TAIR" id="AT1G13790">
    <property type="gene designation" value="FDM4"/>
</dbReference>
<dbReference type="eggNOG" id="ENOG502QWMB">
    <property type="taxonomic scope" value="Eukaryota"/>
</dbReference>
<dbReference type="HOGENOM" id="CLU_021775_1_1_1"/>
<dbReference type="InParanoid" id="Q9LMH6"/>
<dbReference type="OMA" id="MKGALQV"/>
<dbReference type="OrthoDB" id="1892195at2759"/>
<dbReference type="PhylomeDB" id="Q9LMH6"/>
<dbReference type="PRO" id="PR:Q9LMH6"/>
<dbReference type="Proteomes" id="UP000006548">
    <property type="component" value="Chromosome 1"/>
</dbReference>
<dbReference type="ExpressionAtlas" id="Q9LMH6">
    <property type="expression patterns" value="baseline and differential"/>
</dbReference>
<dbReference type="GO" id="GO:0008168">
    <property type="term" value="F:methyltransferase activity"/>
    <property type="evidence" value="ECO:0007669"/>
    <property type="project" value="UniProtKB-KW"/>
</dbReference>
<dbReference type="GO" id="GO:0080188">
    <property type="term" value="P:gene silencing by siRNA-directed DNA methylation"/>
    <property type="evidence" value="ECO:0000316"/>
    <property type="project" value="TAIR"/>
</dbReference>
<dbReference type="GO" id="GO:0032259">
    <property type="term" value="P:methylation"/>
    <property type="evidence" value="ECO:0007669"/>
    <property type="project" value="UniProtKB-KW"/>
</dbReference>
<dbReference type="CDD" id="cd12266">
    <property type="entry name" value="RRM_like_XS"/>
    <property type="match status" value="1"/>
</dbReference>
<dbReference type="FunFam" id="3.30.70.2890:FF:000001">
    <property type="entry name" value="Factor of DNA methylation 2"/>
    <property type="match status" value="1"/>
</dbReference>
<dbReference type="Gene3D" id="3.30.70.2890">
    <property type="entry name" value="XS domain"/>
    <property type="match status" value="1"/>
</dbReference>
<dbReference type="InterPro" id="IPR045177">
    <property type="entry name" value="FDM1-5/IDN2"/>
</dbReference>
<dbReference type="InterPro" id="IPR005379">
    <property type="entry name" value="FDM1-5/IDN2_XH"/>
</dbReference>
<dbReference type="InterPro" id="IPR005380">
    <property type="entry name" value="XS_domain"/>
</dbReference>
<dbReference type="InterPro" id="IPR038588">
    <property type="entry name" value="XS_domain_sf"/>
</dbReference>
<dbReference type="InterPro" id="IPR005381">
    <property type="entry name" value="Znf-XS_domain"/>
</dbReference>
<dbReference type="PANTHER" id="PTHR21596:SF23">
    <property type="entry name" value="FACTOR OF DNA METHYLATION 4"/>
    <property type="match status" value="1"/>
</dbReference>
<dbReference type="PANTHER" id="PTHR21596">
    <property type="entry name" value="RIBONUCLEASE P SUBUNIT P38"/>
    <property type="match status" value="1"/>
</dbReference>
<dbReference type="Pfam" id="PF03469">
    <property type="entry name" value="XH"/>
    <property type="match status" value="1"/>
</dbReference>
<dbReference type="Pfam" id="PF03468">
    <property type="entry name" value="XS"/>
    <property type="match status" value="1"/>
</dbReference>
<dbReference type="Pfam" id="PF03470">
    <property type="entry name" value="zf-XS"/>
    <property type="match status" value="1"/>
</dbReference>
<accession>Q9LMH6</accession>
<feature type="chain" id="PRO_0000430684" description="Factor of DNA methylation 4">
    <location>
        <begin position="1"/>
        <end position="736"/>
    </location>
</feature>
<feature type="region of interest" description="Disordered" evidence="2">
    <location>
        <begin position="80"/>
        <end position="167"/>
    </location>
</feature>
<feature type="coiled-coil region" evidence="1">
    <location>
        <begin position="360"/>
        <end position="597"/>
    </location>
</feature>
<feature type="compositionally biased region" description="Basic and acidic residues" evidence="2">
    <location>
        <begin position="80"/>
        <end position="90"/>
    </location>
</feature>
<feature type="compositionally biased region" description="Basic and acidic residues" evidence="2">
    <location>
        <begin position="144"/>
        <end position="167"/>
    </location>
</feature>
<name>FDM4_ARATH</name>
<comment type="function">
    <text evidence="3">Acts in association with FDM3 and FDM5 for RNA-directed DNA methylation (RdDM).</text>
</comment>
<reference key="1">
    <citation type="journal article" date="2000" name="Nature">
        <title>Sequence and analysis of chromosome 1 of the plant Arabidopsis thaliana.</title>
        <authorList>
            <person name="Theologis A."/>
            <person name="Ecker J.R."/>
            <person name="Palm C.J."/>
            <person name="Federspiel N.A."/>
            <person name="Kaul S."/>
            <person name="White O."/>
            <person name="Alonso J."/>
            <person name="Altafi H."/>
            <person name="Araujo R."/>
            <person name="Bowman C.L."/>
            <person name="Brooks S.Y."/>
            <person name="Buehler E."/>
            <person name="Chan A."/>
            <person name="Chao Q."/>
            <person name="Chen H."/>
            <person name="Cheuk R.F."/>
            <person name="Chin C.W."/>
            <person name="Chung M.K."/>
            <person name="Conn L."/>
            <person name="Conway A.B."/>
            <person name="Conway A.R."/>
            <person name="Creasy T.H."/>
            <person name="Dewar K."/>
            <person name="Dunn P."/>
            <person name="Etgu P."/>
            <person name="Feldblyum T.V."/>
            <person name="Feng J.-D."/>
            <person name="Fong B."/>
            <person name="Fujii C.Y."/>
            <person name="Gill J.E."/>
            <person name="Goldsmith A.D."/>
            <person name="Haas B."/>
            <person name="Hansen N.F."/>
            <person name="Hughes B."/>
            <person name="Huizar L."/>
            <person name="Hunter J.L."/>
            <person name="Jenkins J."/>
            <person name="Johnson-Hopson C."/>
            <person name="Khan S."/>
            <person name="Khaykin E."/>
            <person name="Kim C.J."/>
            <person name="Koo H.L."/>
            <person name="Kremenetskaia I."/>
            <person name="Kurtz D.B."/>
            <person name="Kwan A."/>
            <person name="Lam B."/>
            <person name="Langin-Hooper S."/>
            <person name="Lee A."/>
            <person name="Lee J.M."/>
            <person name="Lenz C.A."/>
            <person name="Li J.H."/>
            <person name="Li Y.-P."/>
            <person name="Lin X."/>
            <person name="Liu S.X."/>
            <person name="Liu Z.A."/>
            <person name="Luros J.S."/>
            <person name="Maiti R."/>
            <person name="Marziali A."/>
            <person name="Militscher J."/>
            <person name="Miranda M."/>
            <person name="Nguyen M."/>
            <person name="Nierman W.C."/>
            <person name="Osborne B.I."/>
            <person name="Pai G."/>
            <person name="Peterson J."/>
            <person name="Pham P.K."/>
            <person name="Rizzo M."/>
            <person name="Rooney T."/>
            <person name="Rowley D."/>
            <person name="Sakano H."/>
            <person name="Salzberg S.L."/>
            <person name="Schwartz J.R."/>
            <person name="Shinn P."/>
            <person name="Southwick A.M."/>
            <person name="Sun H."/>
            <person name="Tallon L.J."/>
            <person name="Tambunga G."/>
            <person name="Toriumi M.J."/>
            <person name="Town C.D."/>
            <person name="Utterback T."/>
            <person name="Van Aken S."/>
            <person name="Vaysberg M."/>
            <person name="Vysotskaia V.S."/>
            <person name="Walker M."/>
            <person name="Wu D."/>
            <person name="Yu G."/>
            <person name="Fraser C.M."/>
            <person name="Venter J.C."/>
            <person name="Davis R.W."/>
        </authorList>
    </citation>
    <scope>NUCLEOTIDE SEQUENCE [LARGE SCALE GENOMIC DNA]</scope>
    <source>
        <strain>cv. Columbia</strain>
    </source>
</reference>
<reference key="2">
    <citation type="journal article" date="2017" name="Plant J.">
        <title>Araport11: a complete reannotation of the Arabidopsis thaliana reference genome.</title>
        <authorList>
            <person name="Cheng C.Y."/>
            <person name="Krishnakumar V."/>
            <person name="Chan A.P."/>
            <person name="Thibaud-Nissen F."/>
            <person name="Schobel S."/>
            <person name="Town C.D."/>
        </authorList>
    </citation>
    <scope>GENOME REANNOTATION</scope>
    <source>
        <strain>cv. Columbia</strain>
    </source>
</reference>
<reference key="3">
    <citation type="journal article" date="2012" name="Nucleic Acids Res.">
        <title>A subgroup of SGS3-like proteins act redundantly in RNA-directed DNA methylation.</title>
        <authorList>
            <person name="Xie M."/>
            <person name="Ren G."/>
            <person name="Costa-Nunes P."/>
            <person name="Pontes O."/>
            <person name="Yu B."/>
        </authorList>
    </citation>
    <scope>FUNCTION</scope>
</reference>
<organism>
    <name type="scientific">Arabidopsis thaliana</name>
    <name type="common">Mouse-ear cress</name>
    <dbReference type="NCBI Taxonomy" id="3702"/>
    <lineage>
        <taxon>Eukaryota</taxon>
        <taxon>Viridiplantae</taxon>
        <taxon>Streptophyta</taxon>
        <taxon>Embryophyta</taxon>
        <taxon>Tracheophyta</taxon>
        <taxon>Spermatophyta</taxon>
        <taxon>Magnoliopsida</taxon>
        <taxon>eudicotyledons</taxon>
        <taxon>Gunneridae</taxon>
        <taxon>Pentapetalae</taxon>
        <taxon>rosids</taxon>
        <taxon>malvids</taxon>
        <taxon>Brassicales</taxon>
        <taxon>Brassicaceae</taxon>
        <taxon>Camelineae</taxon>
        <taxon>Arabidopsis</taxon>
    </lineage>
</organism>
<keyword id="KW-0175">Coiled coil</keyword>
<keyword id="KW-0489">Methyltransferase</keyword>
<keyword id="KW-1185">Reference proteome</keyword>
<keyword id="KW-0943">RNA-mediated gene silencing</keyword>
<keyword id="KW-0808">Transferase</keyword>
<evidence type="ECO:0000255" key="1"/>
<evidence type="ECO:0000256" key="2">
    <source>
        <dbReference type="SAM" id="MobiDB-lite"/>
    </source>
</evidence>
<evidence type="ECO:0000269" key="3">
    <source>
    </source>
</evidence>
<evidence type="ECO:0000303" key="4">
    <source>
    </source>
</evidence>
<evidence type="ECO:0000312" key="5">
    <source>
        <dbReference type="Araport" id="AT1G13790"/>
    </source>
</evidence>
<evidence type="ECO:0000312" key="6">
    <source>
        <dbReference type="EMBL" id="AAF79392.1"/>
    </source>
</evidence>
<gene>
    <name evidence="4" type="primary">FDM4</name>
    <name evidence="5" type="ordered locus">At1g13790</name>
    <name evidence="6" type="ORF">F16A14.3</name>
</gene>
<protein>
    <recommendedName>
        <fullName evidence="4">Factor of DNA methylation 4</fullName>
    </recommendedName>
</protein>